<feature type="signal peptide" evidence="2">
    <location>
        <begin position="1"/>
        <end position="27"/>
    </location>
</feature>
<feature type="chain" id="PRO_0000013770" description="Glycosyl hydrolase DigH">
    <location>
        <begin position="28"/>
        <end position="439"/>
    </location>
</feature>
<feature type="region of interest" description="Disordered" evidence="3">
    <location>
        <begin position="34"/>
        <end position="54"/>
    </location>
</feature>
<feature type="lipid moiety-binding region" description="N-palmitoyl cysteine" evidence="2">
    <location>
        <position position="28"/>
    </location>
</feature>
<feature type="lipid moiety-binding region" description="S-diacylglycerol cysteine" evidence="2">
    <location>
        <position position="28"/>
    </location>
</feature>
<dbReference type="EC" id="3.2.1.-" evidence="1"/>
<dbReference type="EMBL" id="AE005674">
    <property type="protein sequence ID" value="AAN43311.1"/>
    <property type="molecule type" value="Genomic_DNA"/>
</dbReference>
<dbReference type="EMBL" id="AE014073">
    <property type="protein sequence ID" value="AAP17198.1"/>
    <property type="molecule type" value="Genomic_DNA"/>
</dbReference>
<dbReference type="RefSeq" id="NP_707604.1">
    <property type="nucleotide sequence ID" value="NC_004337.2"/>
</dbReference>
<dbReference type="RefSeq" id="WP_000350395.1">
    <property type="nucleotide sequence ID" value="NZ_WPGW01000136.1"/>
</dbReference>
<dbReference type="SMR" id="P64428"/>
<dbReference type="STRING" id="198214.SF1736"/>
<dbReference type="PaxDb" id="198214-SF1736"/>
<dbReference type="GeneID" id="1024952"/>
<dbReference type="KEGG" id="sfl:SF1736"/>
<dbReference type="KEGG" id="sfx:S1869"/>
<dbReference type="PATRIC" id="fig|198214.7.peg.2057"/>
<dbReference type="HOGENOM" id="CLU_019247_0_1_6"/>
<dbReference type="Proteomes" id="UP000001006">
    <property type="component" value="Chromosome"/>
</dbReference>
<dbReference type="Proteomes" id="UP000002673">
    <property type="component" value="Chromosome"/>
</dbReference>
<dbReference type="GO" id="GO:0009279">
    <property type="term" value="C:cell outer membrane"/>
    <property type="evidence" value="ECO:0007669"/>
    <property type="project" value="UniProtKB-SubCell"/>
</dbReference>
<dbReference type="GO" id="GO:0016798">
    <property type="term" value="F:hydrolase activity, acting on glycosyl bonds"/>
    <property type="evidence" value="ECO:0007669"/>
    <property type="project" value="UniProtKB-KW"/>
</dbReference>
<dbReference type="GO" id="GO:0071555">
    <property type="term" value="P:cell wall organization"/>
    <property type="evidence" value="ECO:0007669"/>
    <property type="project" value="UniProtKB-KW"/>
</dbReference>
<dbReference type="CDD" id="cd00551">
    <property type="entry name" value="AmyAc_family"/>
    <property type="match status" value="1"/>
</dbReference>
<dbReference type="Gene3D" id="3.20.20.80">
    <property type="entry name" value="Glycosidases"/>
    <property type="match status" value="1"/>
</dbReference>
<dbReference type="InterPro" id="IPR052177">
    <property type="entry name" value="Divisome_Glycosyl_Hydrolase"/>
</dbReference>
<dbReference type="InterPro" id="IPR003790">
    <property type="entry name" value="GHL10"/>
</dbReference>
<dbReference type="InterPro" id="IPR017853">
    <property type="entry name" value="Glycoside_hydrolase_SF"/>
</dbReference>
<dbReference type="PANTHER" id="PTHR43405">
    <property type="entry name" value="GLYCOSYL HYDROLASE DIGH"/>
    <property type="match status" value="1"/>
</dbReference>
<dbReference type="PANTHER" id="PTHR43405:SF1">
    <property type="entry name" value="GLYCOSYL HYDROLASE DIGH"/>
    <property type="match status" value="1"/>
</dbReference>
<dbReference type="Pfam" id="PF02638">
    <property type="entry name" value="GHL10"/>
    <property type="match status" value="1"/>
</dbReference>
<dbReference type="SUPFAM" id="SSF51445">
    <property type="entry name" value="(Trans)glycosidases"/>
    <property type="match status" value="1"/>
</dbReference>
<dbReference type="PROSITE" id="PS51257">
    <property type="entry name" value="PROKAR_LIPOPROTEIN"/>
    <property type="match status" value="1"/>
</dbReference>
<protein>
    <recommendedName>
        <fullName evidence="1">Glycosyl hydrolase DigH</fullName>
        <ecNumber evidence="1">3.2.1.-</ecNumber>
    </recommendedName>
    <alternativeName>
        <fullName evidence="1">Divisome-localized glycosyl hydrolase</fullName>
    </alternativeName>
</protein>
<evidence type="ECO:0000250" key="1">
    <source>
        <dbReference type="UniProtKB" id="P64426"/>
    </source>
</evidence>
<evidence type="ECO:0000255" key="2">
    <source>
        <dbReference type="PROSITE-ProRule" id="PRU00303"/>
    </source>
</evidence>
<evidence type="ECO:0000256" key="3">
    <source>
        <dbReference type="SAM" id="MobiDB-lite"/>
    </source>
</evidence>
<evidence type="ECO:0000305" key="4"/>
<gene>
    <name evidence="1" type="primary">digH</name>
    <name type="synonym">yddW</name>
    <name type="ordered locus">SF1736</name>
    <name type="ordered locus">S1869</name>
</gene>
<keyword id="KW-0998">Cell outer membrane</keyword>
<keyword id="KW-0961">Cell wall biogenesis/degradation</keyword>
<keyword id="KW-0326">Glycosidase</keyword>
<keyword id="KW-0378">Hydrolase</keyword>
<keyword id="KW-0449">Lipoprotein</keyword>
<keyword id="KW-0472">Membrane</keyword>
<keyword id="KW-0564">Palmitate</keyword>
<keyword id="KW-1185">Reference proteome</keyword>
<keyword id="KW-0732">Signal</keyword>
<reference key="1">
    <citation type="journal article" date="2002" name="Nucleic Acids Res.">
        <title>Genome sequence of Shigella flexneri 2a: insights into pathogenicity through comparison with genomes of Escherichia coli K12 and O157.</title>
        <authorList>
            <person name="Jin Q."/>
            <person name="Yuan Z."/>
            <person name="Xu J."/>
            <person name="Wang Y."/>
            <person name="Shen Y."/>
            <person name="Lu W."/>
            <person name="Wang J."/>
            <person name="Liu H."/>
            <person name="Yang J."/>
            <person name="Yang F."/>
            <person name="Zhang X."/>
            <person name="Zhang J."/>
            <person name="Yang G."/>
            <person name="Wu H."/>
            <person name="Qu D."/>
            <person name="Dong J."/>
            <person name="Sun L."/>
            <person name="Xue Y."/>
            <person name="Zhao A."/>
            <person name="Gao Y."/>
            <person name="Zhu J."/>
            <person name="Kan B."/>
            <person name="Ding K."/>
            <person name="Chen S."/>
            <person name="Cheng H."/>
            <person name="Yao Z."/>
            <person name="He B."/>
            <person name="Chen R."/>
            <person name="Ma D."/>
            <person name="Qiang B."/>
            <person name="Wen Y."/>
            <person name="Hou Y."/>
            <person name="Yu J."/>
        </authorList>
    </citation>
    <scope>NUCLEOTIDE SEQUENCE [LARGE SCALE GENOMIC DNA]</scope>
    <source>
        <strain>301 / Serotype 2a</strain>
    </source>
</reference>
<reference key="2">
    <citation type="journal article" date="2003" name="Infect. Immun.">
        <title>Complete genome sequence and comparative genomics of Shigella flexneri serotype 2a strain 2457T.</title>
        <authorList>
            <person name="Wei J."/>
            <person name="Goldberg M.B."/>
            <person name="Burland V."/>
            <person name="Venkatesan M.M."/>
            <person name="Deng W."/>
            <person name="Fournier G."/>
            <person name="Mayhew G.F."/>
            <person name="Plunkett G. III"/>
            <person name="Rose D.J."/>
            <person name="Darling A."/>
            <person name="Mau B."/>
            <person name="Perna N.T."/>
            <person name="Payne S.M."/>
            <person name="Runyen-Janecky L.J."/>
            <person name="Zhou S."/>
            <person name="Schwartz D.C."/>
            <person name="Blattner F.R."/>
        </authorList>
    </citation>
    <scope>NUCLEOTIDE SEQUENCE [LARGE SCALE GENOMIC DNA]</scope>
    <source>
        <strain>ATCC 700930 / 2457T / Serotype 2a</strain>
    </source>
</reference>
<comment type="function">
    <text evidence="1">Divisome-localized glycosyl hydrolase that cleaves peptide-free (denuded) peptidoglycans.</text>
</comment>
<comment type="subcellular location">
    <subcellularLocation>
        <location evidence="1">Cell outer membrane</location>
        <topology evidence="2">Lipid-anchor</topology>
    </subcellularLocation>
    <text evidence="1">Localizes to the divisome.</text>
</comment>
<comment type="similarity">
    <text evidence="4">Belongs to the glycosyl hydrolase-like 10 (GHL10) family.</text>
</comment>
<name>DIGH_SHIFL</name>
<sequence length="439" mass="49574">MDICSRNKKLTIRRPAILVALALLLCSCKSTPPESMVTPPAGSKPPATTQQSSQPMRGIWLATVSRLDWPPVSSVNISNPTSRARVQQQAMIDKLDHLQRLGINTVFFQVKPDGTALWPSKILPWSDLMTGKIGENPGYDPLQFMLDEAHKRGMKVHAWFNPYRVSVNTKPGTIRELNSTLSQQPASVYVQHRDWIRTSGDRFVLDPGIPEVQDWITSIVAEVVSRYPVDGVQFDDYFYTESPGSRLNDNETYRKYGGAFASKADWRRNNTQQLIAKVSHTIKSIKPGVEFGVSPAGVWRNRSHDPLGSDTRGAAAYDESYADTRRWVEQGLLDYIAPQIYWPFSRSAARYDVLAKWWADVVKPTRTRLYIGIAFYKVGEPSKIEPDWMINGGVPELKKQLDLNDAVPEISGTILFREDYLNKPQTQQAVSYLQSRWGS</sequence>
<accession>P64428</accession>
<accession>P76130</accession>
<proteinExistence type="inferred from homology"/>
<organism>
    <name type="scientific">Shigella flexneri</name>
    <dbReference type="NCBI Taxonomy" id="623"/>
    <lineage>
        <taxon>Bacteria</taxon>
        <taxon>Pseudomonadati</taxon>
        <taxon>Pseudomonadota</taxon>
        <taxon>Gammaproteobacteria</taxon>
        <taxon>Enterobacterales</taxon>
        <taxon>Enterobacteriaceae</taxon>
        <taxon>Shigella</taxon>
    </lineage>
</organism>